<gene>
    <name evidence="1" type="primary">ureA</name>
    <name type="ordered locus">APL_1618</name>
</gene>
<proteinExistence type="inferred from homology"/>
<protein>
    <recommendedName>
        <fullName evidence="1">Urease subunit gamma</fullName>
        <ecNumber evidence="1">3.5.1.5</ecNumber>
    </recommendedName>
    <alternativeName>
        <fullName evidence="1">Urea amidohydrolase subunit gamma</fullName>
    </alternativeName>
</protein>
<reference key="1">
    <citation type="journal article" date="2008" name="J. Bacteriol.">
        <title>The complete genome sequence of Actinobacillus pleuropneumoniae L20 (serotype 5b).</title>
        <authorList>
            <person name="Foote S.J."/>
            <person name="Bosse J.T."/>
            <person name="Bouevitch A.B."/>
            <person name="Langford P.R."/>
            <person name="Young N.M."/>
            <person name="Nash J.H.E."/>
        </authorList>
    </citation>
    <scope>NUCLEOTIDE SEQUENCE [LARGE SCALE GENOMIC DNA]</scope>
    <source>
        <strain>L20</strain>
    </source>
</reference>
<accession>A3N2R6</accession>
<organism>
    <name type="scientific">Actinobacillus pleuropneumoniae serotype 5b (strain L20)</name>
    <dbReference type="NCBI Taxonomy" id="416269"/>
    <lineage>
        <taxon>Bacteria</taxon>
        <taxon>Pseudomonadati</taxon>
        <taxon>Pseudomonadota</taxon>
        <taxon>Gammaproteobacteria</taxon>
        <taxon>Pasteurellales</taxon>
        <taxon>Pasteurellaceae</taxon>
        <taxon>Actinobacillus</taxon>
    </lineage>
</organism>
<feature type="chain" id="PRO_1000046306" description="Urease subunit gamma">
    <location>
        <begin position="1"/>
        <end position="100"/>
    </location>
</feature>
<dbReference type="EC" id="3.5.1.5" evidence="1"/>
<dbReference type="EMBL" id="CP000569">
    <property type="protein sequence ID" value="ABN74702.1"/>
    <property type="molecule type" value="Genomic_DNA"/>
</dbReference>
<dbReference type="RefSeq" id="WP_005599005.1">
    <property type="nucleotide sequence ID" value="NC_009053.1"/>
</dbReference>
<dbReference type="SMR" id="A3N2R6"/>
<dbReference type="STRING" id="416269.APL_1618"/>
<dbReference type="EnsemblBacteria" id="ABN74702">
    <property type="protein sequence ID" value="ABN74702"/>
    <property type="gene ID" value="APL_1618"/>
</dbReference>
<dbReference type="GeneID" id="92743739"/>
<dbReference type="KEGG" id="apl:APL_1618"/>
<dbReference type="eggNOG" id="COG0831">
    <property type="taxonomic scope" value="Bacteria"/>
</dbReference>
<dbReference type="HOGENOM" id="CLU_145825_1_0_6"/>
<dbReference type="UniPathway" id="UPA00258">
    <property type="reaction ID" value="UER00370"/>
</dbReference>
<dbReference type="Proteomes" id="UP000001432">
    <property type="component" value="Chromosome"/>
</dbReference>
<dbReference type="GO" id="GO:0005737">
    <property type="term" value="C:cytoplasm"/>
    <property type="evidence" value="ECO:0007669"/>
    <property type="project" value="UniProtKB-SubCell"/>
</dbReference>
<dbReference type="GO" id="GO:0016151">
    <property type="term" value="F:nickel cation binding"/>
    <property type="evidence" value="ECO:0007669"/>
    <property type="project" value="InterPro"/>
</dbReference>
<dbReference type="GO" id="GO:0009039">
    <property type="term" value="F:urease activity"/>
    <property type="evidence" value="ECO:0007669"/>
    <property type="project" value="UniProtKB-UniRule"/>
</dbReference>
<dbReference type="GO" id="GO:0043419">
    <property type="term" value="P:urea catabolic process"/>
    <property type="evidence" value="ECO:0007669"/>
    <property type="project" value="UniProtKB-UniRule"/>
</dbReference>
<dbReference type="CDD" id="cd00390">
    <property type="entry name" value="Urease_gamma"/>
    <property type="match status" value="1"/>
</dbReference>
<dbReference type="Gene3D" id="3.30.280.10">
    <property type="entry name" value="Urease, gamma-like subunit"/>
    <property type="match status" value="1"/>
</dbReference>
<dbReference type="HAMAP" id="MF_00739">
    <property type="entry name" value="Urease_gamma"/>
    <property type="match status" value="1"/>
</dbReference>
<dbReference type="InterPro" id="IPR012010">
    <property type="entry name" value="Urease_gamma"/>
</dbReference>
<dbReference type="InterPro" id="IPR002026">
    <property type="entry name" value="Urease_gamma/gamma-beta_su"/>
</dbReference>
<dbReference type="InterPro" id="IPR036463">
    <property type="entry name" value="Urease_gamma_sf"/>
</dbReference>
<dbReference type="InterPro" id="IPR050069">
    <property type="entry name" value="Urease_subunit"/>
</dbReference>
<dbReference type="NCBIfam" id="NF009712">
    <property type="entry name" value="PRK13241.1"/>
    <property type="match status" value="1"/>
</dbReference>
<dbReference type="NCBIfam" id="TIGR00193">
    <property type="entry name" value="urease_gam"/>
    <property type="match status" value="1"/>
</dbReference>
<dbReference type="PANTHER" id="PTHR33569">
    <property type="entry name" value="UREASE"/>
    <property type="match status" value="1"/>
</dbReference>
<dbReference type="PANTHER" id="PTHR33569:SF1">
    <property type="entry name" value="UREASE"/>
    <property type="match status" value="1"/>
</dbReference>
<dbReference type="Pfam" id="PF00547">
    <property type="entry name" value="Urease_gamma"/>
    <property type="match status" value="1"/>
</dbReference>
<dbReference type="PIRSF" id="PIRSF001223">
    <property type="entry name" value="Urease_gamma"/>
    <property type="match status" value="1"/>
</dbReference>
<dbReference type="SUPFAM" id="SSF54111">
    <property type="entry name" value="Urease, gamma-subunit"/>
    <property type="match status" value="1"/>
</dbReference>
<name>URE3_ACTP2</name>
<evidence type="ECO:0000255" key="1">
    <source>
        <dbReference type="HAMAP-Rule" id="MF_00739"/>
    </source>
</evidence>
<sequence>MHLTSREQEKLMLFLAGELAAKRKARGVKLNYPEAIAYIASHLQEAARDGMSVAEVMQYGATLLTVDDVMEGIAEMVHEVQIEATFPDGTKLVTVHNPIR</sequence>
<keyword id="KW-0963">Cytoplasm</keyword>
<keyword id="KW-0378">Hydrolase</keyword>
<keyword id="KW-1185">Reference proteome</keyword>
<comment type="catalytic activity">
    <reaction evidence="1">
        <text>urea + 2 H2O + H(+) = hydrogencarbonate + 2 NH4(+)</text>
        <dbReference type="Rhea" id="RHEA:20557"/>
        <dbReference type="ChEBI" id="CHEBI:15377"/>
        <dbReference type="ChEBI" id="CHEBI:15378"/>
        <dbReference type="ChEBI" id="CHEBI:16199"/>
        <dbReference type="ChEBI" id="CHEBI:17544"/>
        <dbReference type="ChEBI" id="CHEBI:28938"/>
        <dbReference type="EC" id="3.5.1.5"/>
    </reaction>
</comment>
<comment type="pathway">
    <text evidence="1">Nitrogen metabolism; urea degradation; CO(2) and NH(3) from urea (urease route): step 1/1.</text>
</comment>
<comment type="subunit">
    <text evidence="1">Heterotrimer of UreA (gamma), UreB (beta) and UreC (alpha) subunits. Three heterotrimers associate to form the active enzyme.</text>
</comment>
<comment type="subcellular location">
    <subcellularLocation>
        <location evidence="1">Cytoplasm</location>
    </subcellularLocation>
</comment>
<comment type="similarity">
    <text evidence="1">Belongs to the urease gamma subunit family.</text>
</comment>